<feature type="chain" id="PRO_0000238459" description="NPL4-like protein 2">
    <location>
        <begin position="1"/>
        <end position="413"/>
    </location>
</feature>
<feature type="domain" description="MPN" evidence="2">
    <location>
        <begin position="131"/>
        <end position="272"/>
    </location>
</feature>
<feature type="modified residue" description="Phosphoserine" evidence="5">
    <location>
        <position position="104"/>
    </location>
</feature>
<feature type="splice variant" id="VSP_018605" description="In isoform 2." evidence="3">
    <original>GPLSSTFPIENRSSRATMRALKTHL</original>
    <variation>VRVFLSTLPLHQSSLFFVLMLCLGK</variation>
    <location>
        <begin position="330"/>
        <end position="354"/>
    </location>
</feature>
<feature type="splice variant" id="VSP_018606" description="In isoform 2." evidence="3">
    <location>
        <begin position="355"/>
        <end position="413"/>
    </location>
</feature>
<name>NPL42_ARATH</name>
<proteinExistence type="evidence at protein level"/>
<organism>
    <name type="scientific">Arabidopsis thaliana</name>
    <name type="common">Mouse-ear cress</name>
    <dbReference type="NCBI Taxonomy" id="3702"/>
    <lineage>
        <taxon>Eukaryota</taxon>
        <taxon>Viridiplantae</taxon>
        <taxon>Streptophyta</taxon>
        <taxon>Embryophyta</taxon>
        <taxon>Tracheophyta</taxon>
        <taxon>Spermatophyta</taxon>
        <taxon>Magnoliopsida</taxon>
        <taxon>eudicotyledons</taxon>
        <taxon>Gunneridae</taxon>
        <taxon>Pentapetalae</taxon>
        <taxon>rosids</taxon>
        <taxon>malvids</taxon>
        <taxon>Brassicales</taxon>
        <taxon>Brassicaceae</taxon>
        <taxon>Camelineae</taxon>
        <taxon>Arabidopsis</taxon>
    </lineage>
</organism>
<reference key="1">
    <citation type="journal article" date="1999" name="Nature">
        <title>Sequence and analysis of chromosome 2 of the plant Arabidopsis thaliana.</title>
        <authorList>
            <person name="Lin X."/>
            <person name="Kaul S."/>
            <person name="Rounsley S.D."/>
            <person name="Shea T.P."/>
            <person name="Benito M.-I."/>
            <person name="Town C.D."/>
            <person name="Fujii C.Y."/>
            <person name="Mason T.M."/>
            <person name="Bowman C.L."/>
            <person name="Barnstead M.E."/>
            <person name="Feldblyum T.V."/>
            <person name="Buell C.R."/>
            <person name="Ketchum K.A."/>
            <person name="Lee J.J."/>
            <person name="Ronning C.M."/>
            <person name="Koo H.L."/>
            <person name="Moffat K.S."/>
            <person name="Cronin L.A."/>
            <person name="Shen M."/>
            <person name="Pai G."/>
            <person name="Van Aken S."/>
            <person name="Umayam L."/>
            <person name="Tallon L.J."/>
            <person name="Gill J.E."/>
            <person name="Adams M.D."/>
            <person name="Carrera A.J."/>
            <person name="Creasy T.H."/>
            <person name="Goodman H.M."/>
            <person name="Somerville C.R."/>
            <person name="Copenhaver G.P."/>
            <person name="Preuss D."/>
            <person name="Nierman W.C."/>
            <person name="White O."/>
            <person name="Eisen J.A."/>
            <person name="Salzberg S.L."/>
            <person name="Fraser C.M."/>
            <person name="Venter J.C."/>
        </authorList>
    </citation>
    <scope>NUCLEOTIDE SEQUENCE [LARGE SCALE GENOMIC DNA]</scope>
    <source>
        <strain>cv. Columbia</strain>
    </source>
</reference>
<reference key="2">
    <citation type="journal article" date="2017" name="Plant J.">
        <title>Araport11: a complete reannotation of the Arabidopsis thaliana reference genome.</title>
        <authorList>
            <person name="Cheng C.Y."/>
            <person name="Krishnakumar V."/>
            <person name="Chan A.P."/>
            <person name="Thibaud-Nissen F."/>
            <person name="Schobel S."/>
            <person name="Town C.D."/>
        </authorList>
    </citation>
    <scope>GENOME REANNOTATION</scope>
    <source>
        <strain>cv. Columbia</strain>
    </source>
</reference>
<reference key="3">
    <citation type="journal article" date="2003" name="Science">
        <title>Empirical analysis of transcriptional activity in the Arabidopsis genome.</title>
        <authorList>
            <person name="Yamada K."/>
            <person name="Lim J."/>
            <person name="Dale J.M."/>
            <person name="Chen H."/>
            <person name="Shinn P."/>
            <person name="Palm C.J."/>
            <person name="Southwick A.M."/>
            <person name="Wu H.C."/>
            <person name="Kim C.J."/>
            <person name="Nguyen M."/>
            <person name="Pham P.K."/>
            <person name="Cheuk R.F."/>
            <person name="Karlin-Newmann G."/>
            <person name="Liu S.X."/>
            <person name="Lam B."/>
            <person name="Sakano H."/>
            <person name="Wu T."/>
            <person name="Yu G."/>
            <person name="Miranda M."/>
            <person name="Quach H.L."/>
            <person name="Tripp M."/>
            <person name="Chang C.H."/>
            <person name="Lee J.M."/>
            <person name="Toriumi M.J."/>
            <person name="Chan M.M."/>
            <person name="Tang C.C."/>
            <person name="Onodera C.S."/>
            <person name="Deng J.M."/>
            <person name="Akiyama K."/>
            <person name="Ansari Y."/>
            <person name="Arakawa T."/>
            <person name="Banh J."/>
            <person name="Banno F."/>
            <person name="Bowser L."/>
            <person name="Brooks S.Y."/>
            <person name="Carninci P."/>
            <person name="Chao Q."/>
            <person name="Choy N."/>
            <person name="Enju A."/>
            <person name="Goldsmith A.D."/>
            <person name="Gurjal M."/>
            <person name="Hansen N.F."/>
            <person name="Hayashizaki Y."/>
            <person name="Johnson-Hopson C."/>
            <person name="Hsuan V.W."/>
            <person name="Iida K."/>
            <person name="Karnes M."/>
            <person name="Khan S."/>
            <person name="Koesema E."/>
            <person name="Ishida J."/>
            <person name="Jiang P.X."/>
            <person name="Jones T."/>
            <person name="Kawai J."/>
            <person name="Kamiya A."/>
            <person name="Meyers C."/>
            <person name="Nakajima M."/>
            <person name="Narusaka M."/>
            <person name="Seki M."/>
            <person name="Sakurai T."/>
            <person name="Satou M."/>
            <person name="Tamse R."/>
            <person name="Vaysberg M."/>
            <person name="Wallender E.K."/>
            <person name="Wong C."/>
            <person name="Yamamura Y."/>
            <person name="Yuan S."/>
            <person name="Shinozaki K."/>
            <person name="Davis R.W."/>
            <person name="Theologis A."/>
            <person name="Ecker J.R."/>
        </authorList>
    </citation>
    <scope>NUCLEOTIDE SEQUENCE [LARGE SCALE MRNA] (ISOFORM 1)</scope>
    <source>
        <strain>cv. Columbia</strain>
    </source>
</reference>
<reference key="4">
    <citation type="submission" date="2002-03" db="EMBL/GenBank/DDBJ databases">
        <title>Full-length cDNA from Arabidopsis thaliana.</title>
        <authorList>
            <person name="Brover V."/>
            <person name="Troukhan M."/>
            <person name="Alexandrov N."/>
            <person name="Lu Y.-P."/>
            <person name="Flavell R."/>
            <person name="Feldmann K.A."/>
        </authorList>
    </citation>
    <scope>NUCLEOTIDE SEQUENCE [LARGE SCALE MRNA] (ISOFORM 1)</scope>
</reference>
<reference key="5">
    <citation type="submission" date="2006-04" db="EMBL/GenBank/DDBJ databases">
        <title>Arabidopsis ORF clones.</title>
        <authorList>
            <person name="Shinn P."/>
            <person name="Chen H."/>
            <person name="Kim C.J."/>
            <person name="Ecker J.R."/>
        </authorList>
    </citation>
    <scope>NUCLEOTIDE SEQUENCE [LARGE SCALE MRNA] (ISOFORM 2)</scope>
    <source>
        <strain>cv. Columbia</strain>
    </source>
</reference>
<reference key="6">
    <citation type="journal article" date="2009" name="Plant Physiol.">
        <title>Large-scale Arabidopsis phosphoproteome profiling reveals novel chloroplast kinase substrates and phosphorylation networks.</title>
        <authorList>
            <person name="Reiland S."/>
            <person name="Messerli G."/>
            <person name="Baerenfaller K."/>
            <person name="Gerrits B."/>
            <person name="Endler A."/>
            <person name="Grossmann J."/>
            <person name="Gruissem W."/>
            <person name="Baginsky S."/>
        </authorList>
    </citation>
    <scope>PHOSPHORYLATION [LARGE SCALE ANALYSIS] AT SER-104</scope>
    <scope>IDENTIFICATION BY MASS SPECTROMETRY [LARGE SCALE ANALYSIS]</scope>
</reference>
<sequence>MMMLRIRSRDGLERVTAEGAHITVSQLKTLIADQLQIPLHKQTLSTNRDLLLAKTPADLLAFTDLTDPNLPLSSLNLGHGSMLYLAYDGERSIPGAPPVTPAGSFGRKMTVDDLIARQMRVTRQETSHCDSVSFDRDAANAFQHYVNESLAFAVKRGGFMYGTVTEEGQVEVDFIYEPPQQGTEANLILMRDADEEKRVDAIAMGLGMRRVGFIFNQTVVQDKTEYTLSNAEVLQAAELHAESELKEWVTAVVKLEVNEDGGADVHFEAFQMSDMCIRLFKEEWFETEIMPDDDPKLSKMKKEVVVGVKDLKEVDNDFFLVLVRILDHQGPLSSTFPIENRSSRATMRALKTHLDRAKSLPLVKKMSDFHLLLFVAQFLDVSSDVPALAECVRLQSPVPEGYALLIESMANTC</sequence>
<evidence type="ECO:0000250" key="1"/>
<evidence type="ECO:0000255" key="2">
    <source>
        <dbReference type="PROSITE-ProRule" id="PRU01182"/>
    </source>
</evidence>
<evidence type="ECO:0000303" key="3">
    <source ref="5"/>
</evidence>
<evidence type="ECO:0000305" key="4"/>
<evidence type="ECO:0007744" key="5">
    <source>
    </source>
</evidence>
<accession>O82264</accession>
<accession>Q3E6N3</accession>
<gene>
    <name type="ordered locus">At2g47970</name>
    <name type="ORF">T9J23.1</name>
</gene>
<protein>
    <recommendedName>
        <fullName>NPL4-like protein 2</fullName>
    </recommendedName>
</protein>
<dbReference type="EMBL" id="AC005309">
    <property type="protein sequence ID" value="AAC63651.1"/>
    <property type="molecule type" value="Genomic_DNA"/>
</dbReference>
<dbReference type="EMBL" id="AC006072">
    <property type="protein sequence ID" value="AAM15128.1"/>
    <property type="molecule type" value="Genomic_DNA"/>
</dbReference>
<dbReference type="EMBL" id="CP002685">
    <property type="protein sequence ID" value="AEC10918.1"/>
    <property type="molecule type" value="Genomic_DNA"/>
</dbReference>
<dbReference type="EMBL" id="CP002685">
    <property type="protein sequence ID" value="AEC10919.1"/>
    <property type="molecule type" value="Genomic_DNA"/>
</dbReference>
<dbReference type="EMBL" id="AF372952">
    <property type="status" value="NOT_ANNOTATED_CDS"/>
    <property type="molecule type" value="mRNA"/>
</dbReference>
<dbReference type="EMBL" id="AY089192">
    <property type="status" value="NOT_ANNOTATED_CDS"/>
    <property type="molecule type" value="mRNA"/>
</dbReference>
<dbReference type="EMBL" id="BT025256">
    <property type="protein sequence ID" value="ABF19009.1"/>
    <property type="molecule type" value="mRNA"/>
</dbReference>
<dbReference type="PIR" id="G84921">
    <property type="entry name" value="G84921"/>
</dbReference>
<dbReference type="RefSeq" id="NP_566118.1">
    <molecule id="O82264-1"/>
    <property type="nucleotide sequence ID" value="NM_130364.4"/>
</dbReference>
<dbReference type="RefSeq" id="NP_973714.1">
    <molecule id="O82264-2"/>
    <property type="nucleotide sequence ID" value="NM_201985.1"/>
</dbReference>
<dbReference type="SMR" id="O82264"/>
<dbReference type="BioGRID" id="4744">
    <property type="interactions" value="1"/>
</dbReference>
<dbReference type="FunCoup" id="O82264">
    <property type="interactions" value="3450"/>
</dbReference>
<dbReference type="STRING" id="3702.O82264"/>
<dbReference type="TCDB" id="3.A.16.1.5">
    <property type="family name" value="the endoplasmic reticular retrotranslocon (er-rt) family"/>
</dbReference>
<dbReference type="GlyGen" id="O82264">
    <property type="glycosylation" value="1 site"/>
</dbReference>
<dbReference type="iPTMnet" id="O82264"/>
<dbReference type="PaxDb" id="3702-AT2G47970.1"/>
<dbReference type="ProteomicsDB" id="250544">
    <molecule id="O82264-1"/>
</dbReference>
<dbReference type="EnsemblPlants" id="AT2G47970.1">
    <molecule id="O82264-1"/>
    <property type="protein sequence ID" value="AT2G47970.1"/>
    <property type="gene ID" value="AT2G47970"/>
</dbReference>
<dbReference type="EnsemblPlants" id="AT2G47970.2">
    <molecule id="O82264-2"/>
    <property type="protein sequence ID" value="AT2G47970.2"/>
    <property type="gene ID" value="AT2G47970"/>
</dbReference>
<dbReference type="GeneID" id="819409"/>
<dbReference type="Gramene" id="AT2G47970.1">
    <molecule id="O82264-1"/>
    <property type="protein sequence ID" value="AT2G47970.1"/>
    <property type="gene ID" value="AT2G47970"/>
</dbReference>
<dbReference type="Gramene" id="AT2G47970.2">
    <molecule id="O82264-2"/>
    <property type="protein sequence ID" value="AT2G47970.2"/>
    <property type="gene ID" value="AT2G47970"/>
</dbReference>
<dbReference type="KEGG" id="ath:AT2G47970"/>
<dbReference type="Araport" id="AT2G47970"/>
<dbReference type="TAIR" id="AT2G47970"/>
<dbReference type="eggNOG" id="KOG2834">
    <property type="taxonomic scope" value="Eukaryota"/>
</dbReference>
<dbReference type="HOGENOM" id="CLU_052923_0_0_1"/>
<dbReference type="InParanoid" id="O82264"/>
<dbReference type="OMA" id="MQDKTEY"/>
<dbReference type="OrthoDB" id="10251089at2759"/>
<dbReference type="PhylomeDB" id="O82264"/>
<dbReference type="UniPathway" id="UPA00144"/>
<dbReference type="PRO" id="PR:O82264"/>
<dbReference type="Proteomes" id="UP000006548">
    <property type="component" value="Chromosome 2"/>
</dbReference>
<dbReference type="ExpressionAtlas" id="O82264">
    <property type="expression patterns" value="baseline and differential"/>
</dbReference>
<dbReference type="GO" id="GO:0005829">
    <property type="term" value="C:cytosol"/>
    <property type="evidence" value="ECO:0007005"/>
    <property type="project" value="TAIR"/>
</dbReference>
<dbReference type="GO" id="GO:0043161">
    <property type="term" value="P:proteasome-mediated ubiquitin-dependent protein catabolic process"/>
    <property type="evidence" value="ECO:0007669"/>
    <property type="project" value="UniProtKB-UniPathway"/>
</dbReference>
<dbReference type="CDD" id="cd08061">
    <property type="entry name" value="MPN_NPL4"/>
    <property type="match status" value="1"/>
</dbReference>
<dbReference type="CDD" id="cd17055">
    <property type="entry name" value="Ubl_AtNPL4_like"/>
    <property type="match status" value="1"/>
</dbReference>
<dbReference type="FunFam" id="3.10.20.90:FF:000331">
    <property type="entry name" value="NPL4-like protein 1"/>
    <property type="match status" value="1"/>
</dbReference>
<dbReference type="Gene3D" id="3.10.20.90">
    <property type="entry name" value="Phosphatidylinositol 3-kinase Catalytic Subunit, Chain A, domain 1"/>
    <property type="match status" value="1"/>
</dbReference>
<dbReference type="InterPro" id="IPR037518">
    <property type="entry name" value="MPN"/>
</dbReference>
<dbReference type="InterPro" id="IPR016563">
    <property type="entry name" value="Npl4"/>
</dbReference>
<dbReference type="InterPro" id="IPR007717">
    <property type="entry name" value="NPL4_C"/>
</dbReference>
<dbReference type="InterPro" id="IPR024682">
    <property type="entry name" value="Npl4_Ub-like_dom"/>
</dbReference>
<dbReference type="InterPro" id="IPR029071">
    <property type="entry name" value="Ubiquitin-like_domsf"/>
</dbReference>
<dbReference type="PANTHER" id="PTHR12710">
    <property type="entry name" value="NUCLEAR PROTEIN LOCALIZATION 4"/>
    <property type="match status" value="1"/>
</dbReference>
<dbReference type="PANTHER" id="PTHR12710:SF0">
    <property type="entry name" value="NUCLEAR PROTEIN LOCALIZATION PROTEIN 4 HOMOLOG"/>
    <property type="match status" value="1"/>
</dbReference>
<dbReference type="Pfam" id="PF05021">
    <property type="entry name" value="NPL4"/>
    <property type="match status" value="1"/>
</dbReference>
<dbReference type="Pfam" id="PF11543">
    <property type="entry name" value="UN_NPL4"/>
    <property type="match status" value="1"/>
</dbReference>
<dbReference type="SUPFAM" id="SSF54236">
    <property type="entry name" value="Ubiquitin-like"/>
    <property type="match status" value="1"/>
</dbReference>
<dbReference type="PROSITE" id="PS50249">
    <property type="entry name" value="MPN"/>
    <property type="match status" value="1"/>
</dbReference>
<comment type="function">
    <text evidence="1">May be part of a complex that binds ubiquitinated proteins and that is necessary for the export of misfolded proteins from the ER to the cytoplasm, where they are degraded by the proteasome.</text>
</comment>
<comment type="pathway">
    <text>Protein degradation; proteasomal ubiquitin-dependent pathway.</text>
</comment>
<comment type="alternative products">
    <event type="alternative splicing"/>
    <isoform>
        <id>O82264-1</id>
        <name>1</name>
        <sequence type="displayed"/>
    </isoform>
    <isoform>
        <id>O82264-2</id>
        <name>2</name>
        <sequence type="described" ref="VSP_018605 VSP_018606"/>
    </isoform>
</comment>
<comment type="similarity">
    <text evidence="4">Belongs to the NPL4 family.</text>
</comment>
<comment type="sequence caution" evidence="4">
    <conflict type="frameshift">
        <sequence resource="EMBL" id="AF372952"/>
    </conflict>
</comment>
<comment type="sequence caution" evidence="4">
    <conflict type="frameshift">
        <sequence resource="EMBL" id="AY089192"/>
    </conflict>
</comment>
<keyword id="KW-0025">Alternative splicing</keyword>
<keyword id="KW-0597">Phosphoprotein</keyword>
<keyword id="KW-1185">Reference proteome</keyword>
<keyword id="KW-0833">Ubl conjugation pathway</keyword>